<evidence type="ECO:0000250" key="1">
    <source>
        <dbReference type="UniProtKB" id="P00918"/>
    </source>
</evidence>
<evidence type="ECO:0000250" key="2">
    <source>
        <dbReference type="UniProtKB" id="P07450"/>
    </source>
</evidence>
<evidence type="ECO:0000250" key="3">
    <source>
        <dbReference type="UniProtKB" id="P07451"/>
    </source>
</evidence>
<evidence type="ECO:0000250" key="4">
    <source>
        <dbReference type="UniProtKB" id="P14141"/>
    </source>
</evidence>
<evidence type="ECO:0000255" key="5">
    <source>
        <dbReference type="PROSITE-ProRule" id="PRU01134"/>
    </source>
</evidence>
<evidence type="ECO:0000269" key="6">
    <source>
    </source>
</evidence>
<evidence type="ECO:0000303" key="7">
    <source>
    </source>
</evidence>
<evidence type="ECO:0000305" key="8"/>
<evidence type="ECO:0000312" key="9">
    <source>
        <dbReference type="MGI" id="MGI:88270"/>
    </source>
</evidence>
<evidence type="ECO:0007744" key="10">
    <source>
    </source>
</evidence>
<dbReference type="EC" id="4.2.1.1" evidence="3"/>
<dbReference type="EMBL" id="M27796">
    <property type="protein sequence ID" value="AAA37355.1"/>
    <property type="molecule type" value="mRNA"/>
</dbReference>
<dbReference type="EMBL" id="AF294988">
    <property type="protein sequence ID" value="AAG22029.1"/>
    <property type="molecule type" value="Genomic_DNA"/>
</dbReference>
<dbReference type="EMBL" id="AF294983">
    <property type="protein sequence ID" value="AAG22029.1"/>
    <property type="status" value="JOINED"/>
    <property type="molecule type" value="Genomic_DNA"/>
</dbReference>
<dbReference type="EMBL" id="AF294984">
    <property type="protein sequence ID" value="AAG22029.1"/>
    <property type="status" value="JOINED"/>
    <property type="molecule type" value="Genomic_DNA"/>
</dbReference>
<dbReference type="EMBL" id="AF294985">
    <property type="protein sequence ID" value="AAG22029.1"/>
    <property type="status" value="JOINED"/>
    <property type="molecule type" value="Genomic_DNA"/>
</dbReference>
<dbReference type="EMBL" id="AF294986">
    <property type="protein sequence ID" value="AAG22029.1"/>
    <property type="status" value="JOINED"/>
    <property type="molecule type" value="Genomic_DNA"/>
</dbReference>
<dbReference type="EMBL" id="AF294987">
    <property type="protein sequence ID" value="AAG22029.1"/>
    <property type="status" value="JOINED"/>
    <property type="molecule type" value="Genomic_DNA"/>
</dbReference>
<dbReference type="EMBL" id="BC011129">
    <property type="protein sequence ID" value="AAH11129.1"/>
    <property type="molecule type" value="mRNA"/>
</dbReference>
<dbReference type="CCDS" id="CCDS17250.1"/>
<dbReference type="PIR" id="A43641">
    <property type="entry name" value="A43641"/>
</dbReference>
<dbReference type="RefSeq" id="NP_031632.2">
    <property type="nucleotide sequence ID" value="NM_007606.3"/>
</dbReference>
<dbReference type="SMR" id="P16015"/>
<dbReference type="BioGRID" id="198484">
    <property type="interactions" value="4"/>
</dbReference>
<dbReference type="FunCoup" id="P16015">
    <property type="interactions" value="724"/>
</dbReference>
<dbReference type="IntAct" id="P16015">
    <property type="interactions" value="2"/>
</dbReference>
<dbReference type="MINT" id="P16015"/>
<dbReference type="STRING" id="10090.ENSMUSP00000029076"/>
<dbReference type="GlyGen" id="P16015">
    <property type="glycosylation" value="1 site, 1 O-linked glycan (1 site)"/>
</dbReference>
<dbReference type="iPTMnet" id="P16015"/>
<dbReference type="PhosphoSitePlus" id="P16015"/>
<dbReference type="SwissPalm" id="P16015"/>
<dbReference type="CPTAC" id="non-CPTAC-3694"/>
<dbReference type="jPOST" id="P16015"/>
<dbReference type="PaxDb" id="10090-ENSMUSP00000029076"/>
<dbReference type="PeptideAtlas" id="P16015"/>
<dbReference type="ProteomicsDB" id="265324"/>
<dbReference type="Antibodypedia" id="3326">
    <property type="antibodies" value="465 antibodies from 35 providers"/>
</dbReference>
<dbReference type="DNASU" id="12350"/>
<dbReference type="Ensembl" id="ENSMUST00000029076.6">
    <property type="protein sequence ID" value="ENSMUSP00000029076.5"/>
    <property type="gene ID" value="ENSMUSG00000027559.6"/>
</dbReference>
<dbReference type="GeneID" id="12350"/>
<dbReference type="KEGG" id="mmu:12350"/>
<dbReference type="UCSC" id="uc008oqs.1">
    <property type="organism name" value="mouse"/>
</dbReference>
<dbReference type="AGR" id="MGI:88270"/>
<dbReference type="CTD" id="12350"/>
<dbReference type="MGI" id="MGI:88270">
    <property type="gene designation" value="Car3"/>
</dbReference>
<dbReference type="VEuPathDB" id="HostDB:ENSMUSG00000027559"/>
<dbReference type="eggNOG" id="KOG0382">
    <property type="taxonomic scope" value="Eukaryota"/>
</dbReference>
<dbReference type="GeneTree" id="ENSGT00940000159435"/>
<dbReference type="HOGENOM" id="CLU_039326_2_1_1"/>
<dbReference type="InParanoid" id="P16015"/>
<dbReference type="OMA" id="NYPMAKG"/>
<dbReference type="OrthoDB" id="161at9989"/>
<dbReference type="PhylomeDB" id="P16015"/>
<dbReference type="TreeFam" id="TF316425"/>
<dbReference type="BRENDA" id="4.2.1.1">
    <property type="organism ID" value="3474"/>
</dbReference>
<dbReference type="Reactome" id="R-MMU-1475029">
    <property type="pathway name" value="Reversible hydration of carbon dioxide"/>
</dbReference>
<dbReference type="BioGRID-ORCS" id="12350">
    <property type="hits" value="2 hits in 77 CRISPR screens"/>
</dbReference>
<dbReference type="ChiTaRS" id="Car3">
    <property type="organism name" value="mouse"/>
</dbReference>
<dbReference type="PRO" id="PR:P16015"/>
<dbReference type="Proteomes" id="UP000000589">
    <property type="component" value="Chromosome 3"/>
</dbReference>
<dbReference type="RNAct" id="P16015">
    <property type="molecule type" value="protein"/>
</dbReference>
<dbReference type="Bgee" id="ENSMUSG00000027559">
    <property type="expression patterns" value="Expressed in intercostal muscle and 218 other cell types or tissues"/>
</dbReference>
<dbReference type="GO" id="GO:0005829">
    <property type="term" value="C:cytosol"/>
    <property type="evidence" value="ECO:0000314"/>
    <property type="project" value="MGI"/>
</dbReference>
<dbReference type="GO" id="GO:0004089">
    <property type="term" value="F:carbonate dehydratase activity"/>
    <property type="evidence" value="ECO:0007669"/>
    <property type="project" value="UniProtKB-EC"/>
</dbReference>
<dbReference type="GO" id="GO:0016151">
    <property type="term" value="F:nickel cation binding"/>
    <property type="evidence" value="ECO:0000314"/>
    <property type="project" value="MGI"/>
</dbReference>
<dbReference type="GO" id="GO:0016791">
    <property type="term" value="F:phosphatase activity"/>
    <property type="evidence" value="ECO:0007669"/>
    <property type="project" value="Ensembl"/>
</dbReference>
<dbReference type="GO" id="GO:0008270">
    <property type="term" value="F:zinc ion binding"/>
    <property type="evidence" value="ECO:0007669"/>
    <property type="project" value="InterPro"/>
</dbReference>
<dbReference type="GO" id="GO:0009617">
    <property type="term" value="P:response to bacterium"/>
    <property type="evidence" value="ECO:0000270"/>
    <property type="project" value="MGI"/>
</dbReference>
<dbReference type="GO" id="GO:0045471">
    <property type="term" value="P:response to ethanol"/>
    <property type="evidence" value="ECO:0007669"/>
    <property type="project" value="Ensembl"/>
</dbReference>
<dbReference type="GO" id="GO:0006979">
    <property type="term" value="P:response to oxidative stress"/>
    <property type="evidence" value="ECO:0007669"/>
    <property type="project" value="Ensembl"/>
</dbReference>
<dbReference type="CDD" id="cd03119">
    <property type="entry name" value="alpha_CA_I_II_III_XIII"/>
    <property type="match status" value="1"/>
</dbReference>
<dbReference type="FunFam" id="3.10.200.10:FF:000001">
    <property type="entry name" value="Carbonic anhydrase 2"/>
    <property type="match status" value="1"/>
</dbReference>
<dbReference type="Gene3D" id="3.10.200.10">
    <property type="entry name" value="Alpha carbonic anhydrase"/>
    <property type="match status" value="1"/>
</dbReference>
<dbReference type="InterPro" id="IPR001148">
    <property type="entry name" value="CA_dom"/>
</dbReference>
<dbReference type="InterPro" id="IPR036398">
    <property type="entry name" value="CA_dom_sf"/>
</dbReference>
<dbReference type="InterPro" id="IPR023561">
    <property type="entry name" value="Carbonic_anhydrase_a-class"/>
</dbReference>
<dbReference type="InterPro" id="IPR018338">
    <property type="entry name" value="Carbonic_anhydrase_a-class_CS"/>
</dbReference>
<dbReference type="PANTHER" id="PTHR18952">
    <property type="entry name" value="CARBONIC ANHYDRASE"/>
    <property type="match status" value="1"/>
</dbReference>
<dbReference type="PANTHER" id="PTHR18952:SF127">
    <property type="entry name" value="CARBONIC ANHYDRASE 3"/>
    <property type="match status" value="1"/>
</dbReference>
<dbReference type="Pfam" id="PF00194">
    <property type="entry name" value="Carb_anhydrase"/>
    <property type="match status" value="1"/>
</dbReference>
<dbReference type="SMART" id="SM01057">
    <property type="entry name" value="Carb_anhydrase"/>
    <property type="match status" value="1"/>
</dbReference>
<dbReference type="SUPFAM" id="SSF51069">
    <property type="entry name" value="Carbonic anhydrase"/>
    <property type="match status" value="1"/>
</dbReference>
<dbReference type="PROSITE" id="PS00162">
    <property type="entry name" value="ALPHA_CA_1"/>
    <property type="match status" value="1"/>
</dbReference>
<dbReference type="PROSITE" id="PS51144">
    <property type="entry name" value="ALPHA_CA_2"/>
    <property type="match status" value="1"/>
</dbReference>
<proteinExistence type="evidence at protein level"/>
<protein>
    <recommendedName>
        <fullName>Carbonic anhydrase 3</fullName>
        <ecNumber evidence="3">4.2.1.1</ecNumber>
    </recommendedName>
    <alternativeName>
        <fullName evidence="7">Carbonate dehydratase III</fullName>
    </alternativeName>
    <alternativeName>
        <fullName evidence="7">Carbonic anhydrase III</fullName>
        <shortName evidence="7">CA-III</shortName>
    </alternativeName>
</protein>
<name>CAH3_MOUSE</name>
<reference key="1">
    <citation type="journal article" date="1989" name="Biochem. Genet.">
        <title>Mouse carbonic anhydrase III: nucleotide sequence and expression studies.</title>
        <authorList>
            <person name="Tweedie S."/>
            <person name="Edwards Y."/>
        </authorList>
    </citation>
    <scope>NUCLEOTIDE SEQUENCE [MRNA]</scope>
</reference>
<reference key="2">
    <citation type="journal article" date="2001" name="Gene">
        <title>Nucleotide sequence and structure of the mouse carbonic anhydrase III gene.</title>
        <authorList>
            <person name="Kim G."/>
            <person name="Lee T.-H."/>
            <person name="Wynshaw-Boris A."/>
            <person name="Levine R.L."/>
        </authorList>
    </citation>
    <scope>NUCLEOTIDE SEQUENCE [GENOMIC DNA]</scope>
    <source>
        <strain>129/SvJ</strain>
    </source>
</reference>
<reference key="3">
    <citation type="journal article" date="2004" name="Genome Res.">
        <title>The status, quality, and expansion of the NIH full-length cDNA project: the Mammalian Gene Collection (MGC).</title>
        <authorList>
            <consortium name="The MGC Project Team"/>
        </authorList>
    </citation>
    <scope>NUCLEOTIDE SEQUENCE [LARGE SCALE MRNA]</scope>
    <source>
        <tissue>Liver</tissue>
    </source>
</reference>
<reference key="4">
    <citation type="journal article" date="1991" name="Mol. Endocrinol.">
        <title>Expression of CA III in rodent models of obesity.</title>
        <authorList>
            <person name="Stanton L.W."/>
            <person name="Ponte P.A."/>
            <person name="Coleman R.T."/>
            <person name="Snyder M.A."/>
        </authorList>
    </citation>
    <scope>PROTEIN SEQUENCE OF 79-96</scope>
    <scope>TISSUE SPECIFICITY</scope>
</reference>
<reference key="5">
    <citation type="journal article" date="2010" name="Cell">
        <title>A tissue-specific atlas of mouse protein phosphorylation and expression.</title>
        <authorList>
            <person name="Huttlin E.L."/>
            <person name="Jedrychowski M.P."/>
            <person name="Elias J.E."/>
            <person name="Goswami T."/>
            <person name="Rad R."/>
            <person name="Beausoleil S.A."/>
            <person name="Villen J."/>
            <person name="Haas W."/>
            <person name="Sowa M.E."/>
            <person name="Gygi S.P."/>
        </authorList>
    </citation>
    <scope>PHOSPHORYLATION [LARGE SCALE ANALYSIS] AT THR-176</scope>
    <scope>IDENTIFICATION BY MASS SPECTROMETRY [LARGE SCALE ANALYSIS]</scope>
    <source>
        <tissue>Brain</tissue>
        <tissue>Brown adipose tissue</tissue>
        <tissue>Heart</tissue>
        <tissue>Kidney</tissue>
        <tissue>Liver</tissue>
        <tissue>Lung</tissue>
        <tissue>Pancreas</tissue>
        <tissue>Spleen</tissue>
        <tissue>Testis</tissue>
    </source>
</reference>
<feature type="initiator methionine" description="Removed" evidence="2">
    <location>
        <position position="1"/>
    </location>
</feature>
<feature type="chain" id="PRO_0000077427" description="Carbonic anhydrase 3">
    <location>
        <begin position="2"/>
        <end position="260"/>
    </location>
</feature>
<feature type="domain" description="Alpha-carbonic anhydrase" evidence="5">
    <location>
        <begin position="3"/>
        <end position="259"/>
    </location>
</feature>
<feature type="region of interest" description="Involved in proton transfer" evidence="3">
    <location>
        <begin position="64"/>
        <end position="67"/>
    </location>
</feature>
<feature type="binding site" evidence="1">
    <location>
        <position position="94"/>
    </location>
    <ligand>
        <name>Zn(2+)</name>
        <dbReference type="ChEBI" id="CHEBI:29105"/>
        <note>catalytic</note>
    </ligand>
</feature>
<feature type="binding site" evidence="1">
    <location>
        <position position="96"/>
    </location>
    <ligand>
        <name>Zn(2+)</name>
        <dbReference type="ChEBI" id="CHEBI:29105"/>
        <note>catalytic</note>
    </ligand>
</feature>
<feature type="binding site" evidence="1">
    <location>
        <position position="119"/>
    </location>
    <ligand>
        <name>Zn(2+)</name>
        <dbReference type="ChEBI" id="CHEBI:29105"/>
        <note>catalytic</note>
    </ligand>
</feature>
<feature type="binding site" evidence="1">
    <location>
        <begin position="198"/>
        <end position="199"/>
    </location>
    <ligand>
        <name>substrate</name>
    </ligand>
</feature>
<feature type="modified residue" description="N-acetylalanine" evidence="2">
    <location>
        <position position="2"/>
    </location>
</feature>
<feature type="modified residue" description="Phosphoserine" evidence="4">
    <location>
        <position position="29"/>
    </location>
</feature>
<feature type="modified residue" description="Phosphoserine" evidence="4">
    <location>
        <position position="43"/>
    </location>
</feature>
<feature type="modified residue" description="Phosphoserine" evidence="4">
    <location>
        <position position="48"/>
    </location>
</feature>
<feature type="modified residue" description="Phosphoserine" evidence="4">
    <location>
        <position position="50"/>
    </location>
</feature>
<feature type="modified residue" description="Phosphoserine" evidence="4">
    <location>
        <position position="55"/>
    </location>
</feature>
<feature type="modified residue" description="Phosphothreonine" evidence="4">
    <location>
        <position position="73"/>
    </location>
</feature>
<feature type="modified residue" description="Phosphotyrosine" evidence="4">
    <location>
        <position position="127"/>
    </location>
</feature>
<feature type="modified residue" description="Phosphothreonine" evidence="4">
    <location>
        <position position="129"/>
    </location>
</feature>
<feature type="modified residue" description="Phosphothreonine" evidence="10">
    <location>
        <position position="176"/>
    </location>
</feature>
<feature type="modified residue" description="S-glutathionyl cysteine" evidence="4">
    <location>
        <position position="182"/>
    </location>
</feature>
<feature type="modified residue" description="S-glutathionyl cysteine" evidence="4">
    <location>
        <position position="187"/>
    </location>
</feature>
<feature type="modified residue" description="Phosphothreonine" evidence="4">
    <location>
        <position position="216"/>
    </location>
</feature>
<feature type="modified residue" description="Phosphoserine" evidence="4">
    <location>
        <position position="219"/>
    </location>
</feature>
<feature type="sequence conflict" description="In Ref. 1; AAA37355." evidence="8" ref="1">
    <original>S</original>
    <variation>R</variation>
    <location>
        <position position="9"/>
    </location>
</feature>
<feature type="sequence conflict" description="In Ref. 1; AAA37355." evidence="8" ref="1">
    <original>G</original>
    <variation>R</variation>
    <location>
        <position position="86"/>
    </location>
</feature>
<feature type="sequence conflict" description="In Ref. 1; AAA37355." evidence="8" ref="1">
    <original>K</original>
    <variation>R</variation>
    <location>
        <position position="126"/>
    </location>
</feature>
<feature type="sequence conflict" description="In Ref. 1; AAA37355." evidence="8" ref="1">
    <original>F</original>
    <variation>L</variation>
    <location>
        <position position="146"/>
    </location>
</feature>
<comment type="function">
    <text evidence="3">Reversible hydration of carbon dioxide.</text>
</comment>
<comment type="catalytic activity">
    <reaction evidence="3">
        <text>hydrogencarbonate + H(+) = CO2 + H2O</text>
        <dbReference type="Rhea" id="RHEA:10748"/>
        <dbReference type="ChEBI" id="CHEBI:15377"/>
        <dbReference type="ChEBI" id="CHEBI:15378"/>
        <dbReference type="ChEBI" id="CHEBI:16526"/>
        <dbReference type="ChEBI" id="CHEBI:17544"/>
        <dbReference type="EC" id="4.2.1.1"/>
    </reaction>
</comment>
<comment type="cofactor">
    <cofactor evidence="3">
        <name>Zn(2+)</name>
        <dbReference type="ChEBI" id="CHEBI:29105"/>
    </cofactor>
</comment>
<comment type="activity regulation">
    <text evidence="3">Inhibited by acetazolamide.</text>
</comment>
<comment type="subcellular location">
    <subcellularLocation>
        <location evidence="3">Cytoplasm</location>
    </subcellularLocation>
</comment>
<comment type="tissue specificity">
    <text evidence="6">Expressed at lower levels in adipose tissue from animals that were either genetically obese or had experimentally induced obesity.</text>
</comment>
<comment type="PTM">
    <text evidence="4">S-thiolated both by thiol-disulfide exchange with glutathione disulfide and by oxyradical-initiated S-thiolation with reduced glutathione.</text>
</comment>
<comment type="PTM">
    <text evidence="4">S-glutathionylated in hepatocytes under oxidative stress.</text>
</comment>
<comment type="similarity">
    <text evidence="8">Belongs to the alpha-carbonic anhydrase family.</text>
</comment>
<keyword id="KW-0007">Acetylation</keyword>
<keyword id="KW-0963">Cytoplasm</keyword>
<keyword id="KW-0903">Direct protein sequencing</keyword>
<keyword id="KW-0318">Glutathionylation</keyword>
<keyword id="KW-0456">Lyase</keyword>
<keyword id="KW-0479">Metal-binding</keyword>
<keyword id="KW-0597">Phosphoprotein</keyword>
<keyword id="KW-1185">Reference proteome</keyword>
<keyword id="KW-0862">Zinc</keyword>
<accession>P16015</accession>
<accession>Q9ERN8</accession>
<sequence>MAKEWGYASHNGPDHWHELYPIAKGDNQSPIELHTKDIKHDPSLQPWSASYDPGSAKTILNNGKTCRVVFDDTYDRSMLRGGPLSGPYRLRQFHLHWGSSDDHGSEHTVDGVKYAAELHLVHWNPKYNTFGEALKQPDGIAVVGIFLKIGREKGEFQILLDALDKIKTKGKEAPFTHFDPSCLFPACRDYWTYHGSFTTPPCEECIVWLLLKEPMTVSSDQMAKLRSLFSSAENEPPVPLVGNWRPPQPVKGRVVRASFK</sequence>
<gene>
    <name evidence="9" type="primary">Ca3</name>
    <name type="synonym">Car3</name>
</gene>
<organism>
    <name type="scientific">Mus musculus</name>
    <name type="common">Mouse</name>
    <dbReference type="NCBI Taxonomy" id="10090"/>
    <lineage>
        <taxon>Eukaryota</taxon>
        <taxon>Metazoa</taxon>
        <taxon>Chordata</taxon>
        <taxon>Craniata</taxon>
        <taxon>Vertebrata</taxon>
        <taxon>Euteleostomi</taxon>
        <taxon>Mammalia</taxon>
        <taxon>Eutheria</taxon>
        <taxon>Euarchontoglires</taxon>
        <taxon>Glires</taxon>
        <taxon>Rodentia</taxon>
        <taxon>Myomorpha</taxon>
        <taxon>Muroidea</taxon>
        <taxon>Muridae</taxon>
        <taxon>Murinae</taxon>
        <taxon>Mus</taxon>
        <taxon>Mus</taxon>
    </lineage>
</organism>